<gene>
    <name type="primary">Hsp22</name>
    <name type="ORF">CG4460</name>
</gene>
<protein>
    <recommendedName>
        <fullName>Heat shock protein 22</fullName>
    </recommendedName>
</protein>
<accession>P02515</accession>
<accession>A4V1Q5</accession>
<accession>Q95SZ4</accession>
<accession>Q9VSX1</accession>
<organism>
    <name type="scientific">Drosophila melanogaster</name>
    <name type="common">Fruit fly</name>
    <dbReference type="NCBI Taxonomy" id="7227"/>
    <lineage>
        <taxon>Eukaryota</taxon>
        <taxon>Metazoa</taxon>
        <taxon>Ecdysozoa</taxon>
        <taxon>Arthropoda</taxon>
        <taxon>Hexapoda</taxon>
        <taxon>Insecta</taxon>
        <taxon>Pterygota</taxon>
        <taxon>Neoptera</taxon>
        <taxon>Endopterygota</taxon>
        <taxon>Diptera</taxon>
        <taxon>Brachycera</taxon>
        <taxon>Muscomorpha</taxon>
        <taxon>Ephydroidea</taxon>
        <taxon>Drosophilidae</taxon>
        <taxon>Drosophila</taxon>
        <taxon>Sophophora</taxon>
    </lineage>
</organism>
<reference key="1">
    <citation type="journal article" date="1983" name="J. Mol. Biol.">
        <title>Nucleotide sequence analysis of the Drosophila small heat shock gene cluster at locus 67B.</title>
        <authorList>
            <person name="Southgate R."/>
            <person name="Ayme A."/>
            <person name="Voellmy R."/>
        </authorList>
    </citation>
    <scope>NUCLEOTIDE SEQUENCE [GENOMIC DNA]</scope>
    <source>
        <strain>Oregon-R</strain>
    </source>
</reference>
<reference key="2">
    <citation type="journal article" date="1982" name="Proc. Natl. Acad. Sci. U.S.A.">
        <title>Four small Drosophila heat shock proteins are related to each other and to mammalian alpha-crystallin.</title>
        <authorList>
            <person name="Ingolia T.D."/>
            <person name="Craig E.A."/>
        </authorList>
    </citation>
    <scope>NUCLEOTIDE SEQUENCE [GENOMIC DNA]</scope>
</reference>
<reference key="3">
    <citation type="journal article" date="2000" name="Science">
        <title>The genome sequence of Drosophila melanogaster.</title>
        <authorList>
            <person name="Adams M.D."/>
            <person name="Celniker S.E."/>
            <person name="Holt R.A."/>
            <person name="Evans C.A."/>
            <person name="Gocayne J.D."/>
            <person name="Amanatides P.G."/>
            <person name="Scherer S.E."/>
            <person name="Li P.W."/>
            <person name="Hoskins R.A."/>
            <person name="Galle R.F."/>
            <person name="George R.A."/>
            <person name="Lewis S.E."/>
            <person name="Richards S."/>
            <person name="Ashburner M."/>
            <person name="Henderson S.N."/>
            <person name="Sutton G.G."/>
            <person name="Wortman J.R."/>
            <person name="Yandell M.D."/>
            <person name="Zhang Q."/>
            <person name="Chen L.X."/>
            <person name="Brandon R.C."/>
            <person name="Rogers Y.-H.C."/>
            <person name="Blazej R.G."/>
            <person name="Champe M."/>
            <person name="Pfeiffer B.D."/>
            <person name="Wan K.H."/>
            <person name="Doyle C."/>
            <person name="Baxter E.G."/>
            <person name="Helt G."/>
            <person name="Nelson C.R."/>
            <person name="Miklos G.L.G."/>
            <person name="Abril J.F."/>
            <person name="Agbayani A."/>
            <person name="An H.-J."/>
            <person name="Andrews-Pfannkoch C."/>
            <person name="Baldwin D."/>
            <person name="Ballew R.M."/>
            <person name="Basu A."/>
            <person name="Baxendale J."/>
            <person name="Bayraktaroglu L."/>
            <person name="Beasley E.M."/>
            <person name="Beeson K.Y."/>
            <person name="Benos P.V."/>
            <person name="Berman B.P."/>
            <person name="Bhandari D."/>
            <person name="Bolshakov S."/>
            <person name="Borkova D."/>
            <person name="Botchan M.R."/>
            <person name="Bouck J."/>
            <person name="Brokstein P."/>
            <person name="Brottier P."/>
            <person name="Burtis K.C."/>
            <person name="Busam D.A."/>
            <person name="Butler H."/>
            <person name="Cadieu E."/>
            <person name="Center A."/>
            <person name="Chandra I."/>
            <person name="Cherry J.M."/>
            <person name="Cawley S."/>
            <person name="Dahlke C."/>
            <person name="Davenport L.B."/>
            <person name="Davies P."/>
            <person name="de Pablos B."/>
            <person name="Delcher A."/>
            <person name="Deng Z."/>
            <person name="Mays A.D."/>
            <person name="Dew I."/>
            <person name="Dietz S.M."/>
            <person name="Dodson K."/>
            <person name="Doup L.E."/>
            <person name="Downes M."/>
            <person name="Dugan-Rocha S."/>
            <person name="Dunkov B.C."/>
            <person name="Dunn P."/>
            <person name="Durbin K.J."/>
            <person name="Evangelista C.C."/>
            <person name="Ferraz C."/>
            <person name="Ferriera S."/>
            <person name="Fleischmann W."/>
            <person name="Fosler C."/>
            <person name="Gabrielian A.E."/>
            <person name="Garg N.S."/>
            <person name="Gelbart W.M."/>
            <person name="Glasser K."/>
            <person name="Glodek A."/>
            <person name="Gong F."/>
            <person name="Gorrell J.H."/>
            <person name="Gu Z."/>
            <person name="Guan P."/>
            <person name="Harris M."/>
            <person name="Harris N.L."/>
            <person name="Harvey D.A."/>
            <person name="Heiman T.J."/>
            <person name="Hernandez J.R."/>
            <person name="Houck J."/>
            <person name="Hostin D."/>
            <person name="Houston K.A."/>
            <person name="Howland T.J."/>
            <person name="Wei M.-H."/>
            <person name="Ibegwam C."/>
            <person name="Jalali M."/>
            <person name="Kalush F."/>
            <person name="Karpen G.H."/>
            <person name="Ke Z."/>
            <person name="Kennison J.A."/>
            <person name="Ketchum K.A."/>
            <person name="Kimmel B.E."/>
            <person name="Kodira C.D."/>
            <person name="Kraft C.L."/>
            <person name="Kravitz S."/>
            <person name="Kulp D."/>
            <person name="Lai Z."/>
            <person name="Lasko P."/>
            <person name="Lei Y."/>
            <person name="Levitsky A.A."/>
            <person name="Li J.H."/>
            <person name="Li Z."/>
            <person name="Liang Y."/>
            <person name="Lin X."/>
            <person name="Liu X."/>
            <person name="Mattei B."/>
            <person name="McIntosh T.C."/>
            <person name="McLeod M.P."/>
            <person name="McPherson D."/>
            <person name="Merkulov G."/>
            <person name="Milshina N.V."/>
            <person name="Mobarry C."/>
            <person name="Morris J."/>
            <person name="Moshrefi A."/>
            <person name="Mount S.M."/>
            <person name="Moy M."/>
            <person name="Murphy B."/>
            <person name="Murphy L."/>
            <person name="Muzny D.M."/>
            <person name="Nelson D.L."/>
            <person name="Nelson D.R."/>
            <person name="Nelson K.A."/>
            <person name="Nixon K."/>
            <person name="Nusskern D.R."/>
            <person name="Pacleb J.M."/>
            <person name="Palazzolo M."/>
            <person name="Pittman G.S."/>
            <person name="Pan S."/>
            <person name="Pollard J."/>
            <person name="Puri V."/>
            <person name="Reese M.G."/>
            <person name="Reinert K."/>
            <person name="Remington K."/>
            <person name="Saunders R.D.C."/>
            <person name="Scheeler F."/>
            <person name="Shen H."/>
            <person name="Shue B.C."/>
            <person name="Siden-Kiamos I."/>
            <person name="Simpson M."/>
            <person name="Skupski M.P."/>
            <person name="Smith T.J."/>
            <person name="Spier E."/>
            <person name="Spradling A.C."/>
            <person name="Stapleton M."/>
            <person name="Strong R."/>
            <person name="Sun E."/>
            <person name="Svirskas R."/>
            <person name="Tector C."/>
            <person name="Turner R."/>
            <person name="Venter E."/>
            <person name="Wang A.H."/>
            <person name="Wang X."/>
            <person name="Wang Z.-Y."/>
            <person name="Wassarman D.A."/>
            <person name="Weinstock G.M."/>
            <person name="Weissenbach J."/>
            <person name="Williams S.M."/>
            <person name="Woodage T."/>
            <person name="Worley K.C."/>
            <person name="Wu D."/>
            <person name="Yang S."/>
            <person name="Yao Q.A."/>
            <person name="Ye J."/>
            <person name="Yeh R.-F."/>
            <person name="Zaveri J.S."/>
            <person name="Zhan M."/>
            <person name="Zhang G."/>
            <person name="Zhao Q."/>
            <person name="Zheng L."/>
            <person name="Zheng X.H."/>
            <person name="Zhong F.N."/>
            <person name="Zhong W."/>
            <person name="Zhou X."/>
            <person name="Zhu S.C."/>
            <person name="Zhu X."/>
            <person name="Smith H.O."/>
            <person name="Gibbs R.A."/>
            <person name="Myers E.W."/>
            <person name="Rubin G.M."/>
            <person name="Venter J.C."/>
        </authorList>
    </citation>
    <scope>NUCLEOTIDE SEQUENCE [LARGE SCALE GENOMIC DNA]</scope>
    <source>
        <strain>Berkeley</strain>
    </source>
</reference>
<reference key="4">
    <citation type="journal article" date="2002" name="Genome Biol.">
        <title>Annotation of the Drosophila melanogaster euchromatic genome: a systematic review.</title>
        <authorList>
            <person name="Misra S."/>
            <person name="Crosby M.A."/>
            <person name="Mungall C.J."/>
            <person name="Matthews B.B."/>
            <person name="Campbell K.S."/>
            <person name="Hradecky P."/>
            <person name="Huang Y."/>
            <person name="Kaminker J.S."/>
            <person name="Millburn G.H."/>
            <person name="Prochnik S.E."/>
            <person name="Smith C.D."/>
            <person name="Tupy J.L."/>
            <person name="Whitfield E.J."/>
            <person name="Bayraktaroglu L."/>
            <person name="Berman B.P."/>
            <person name="Bettencourt B.R."/>
            <person name="Celniker S.E."/>
            <person name="de Grey A.D.N.J."/>
            <person name="Drysdale R.A."/>
            <person name="Harris N.L."/>
            <person name="Richter J."/>
            <person name="Russo S."/>
            <person name="Schroeder A.J."/>
            <person name="Shu S.Q."/>
            <person name="Stapleton M."/>
            <person name="Yamada C."/>
            <person name="Ashburner M."/>
            <person name="Gelbart W.M."/>
            <person name="Rubin G.M."/>
            <person name="Lewis S.E."/>
        </authorList>
    </citation>
    <scope>GENOME REANNOTATION</scope>
    <source>
        <strain>Berkeley</strain>
    </source>
</reference>
<reference key="5">
    <citation type="journal article" date="2002" name="Genome Biol.">
        <title>A Drosophila full-length cDNA resource.</title>
        <authorList>
            <person name="Stapleton M."/>
            <person name="Carlson J.W."/>
            <person name="Brokstein P."/>
            <person name="Yu C."/>
            <person name="Champe M."/>
            <person name="George R.A."/>
            <person name="Guarin H."/>
            <person name="Kronmiller B."/>
            <person name="Pacleb J.M."/>
            <person name="Park S."/>
            <person name="Wan K.H."/>
            <person name="Rubin G.M."/>
            <person name="Celniker S.E."/>
        </authorList>
    </citation>
    <scope>NUCLEOTIDE SEQUENCE [LARGE SCALE MRNA]</scope>
    <source>
        <strain>Berkeley</strain>
        <tissue>Embryo</tissue>
        <tissue>Larva</tissue>
        <tissue>Pupae</tissue>
    </source>
</reference>
<reference key="6">
    <citation type="journal article" date="2007" name="Mol. Biosyst.">
        <title>An integrated chemical, mass spectrometric and computational strategy for (quantitative) phosphoproteomics: application to Drosophila melanogaster Kc167 cells.</title>
        <authorList>
            <person name="Bodenmiller B."/>
            <person name="Mueller L.N."/>
            <person name="Pedrioli P.G.A."/>
            <person name="Pflieger D."/>
            <person name="Juenger M.A."/>
            <person name="Eng J.K."/>
            <person name="Aebersold R."/>
            <person name="Tao W.A."/>
        </authorList>
    </citation>
    <scope>PHOSPHORYLATION [LARGE SCALE ANALYSIS] AT THR-152</scope>
    <scope>IDENTIFICATION BY MASS SPECTROMETRY</scope>
</reference>
<feature type="chain" id="PRO_0000125963" description="Heat shock protein 22">
    <location>
        <begin position="1"/>
        <end position="174"/>
    </location>
</feature>
<feature type="domain" description="sHSP" evidence="1">
    <location>
        <begin position="44"/>
        <end position="154"/>
    </location>
</feature>
<feature type="region of interest" description="Disordered" evidence="2">
    <location>
        <begin position="152"/>
        <end position="174"/>
    </location>
</feature>
<feature type="compositionally biased region" description="Basic and acidic residues" evidence="2">
    <location>
        <begin position="159"/>
        <end position="174"/>
    </location>
</feature>
<feature type="modified residue" description="Phosphothreonine" evidence="3">
    <location>
        <position position="152"/>
    </location>
</feature>
<feature type="sequence conflict" description="In Ref. 1; AAA28635 and 2; no nucleotide entry." evidence="4" ref="1 2">
    <original>Q</original>
    <variation>H</variation>
    <location>
        <position position="44"/>
    </location>
</feature>
<feature type="sequence conflict" description="In Ref. 1; AAA28635 and 2; no nucleotide entry." evidence="4" ref="1 2">
    <original>F</original>
    <variation>L</variation>
    <location>
        <position position="53"/>
    </location>
</feature>
<feature type="sequence conflict" description="In Ref. 2; no nucleotide entry." evidence="4" ref="2">
    <original>A</original>
    <variation>P</variation>
    <location>
        <position position="54"/>
    </location>
</feature>
<feature type="sequence conflict" description="In Ref. 1; AAA28635 and 2; no nucleotide entry." evidence="4" ref="1 2">
    <original>G</original>
    <variation>A</variation>
    <location>
        <position position="90"/>
    </location>
</feature>
<feature type="sequence conflict" description="In Ref. 1; AAA28635." evidence="4" ref="1">
    <original>RRF</original>
    <variation>GRY</variation>
    <location>
        <begin position="109"/>
        <end position="111"/>
    </location>
</feature>
<feature type="sequence conflict" description="In Ref. 1; AAA28635." evidence="4" ref="1">
    <original>E</original>
    <variation>D</variation>
    <location>
        <position position="115"/>
    </location>
</feature>
<feature type="sequence conflict" description="In Ref. 1; AAA28635." evidence="4" ref="1">
    <original>TSTLSS</original>
    <variation>SSSLSD</variation>
    <location>
        <begin position="123"/>
        <end position="128"/>
    </location>
</feature>
<feature type="sequence conflict" description="In Ref. 1; AAA28635 and 2; no nucleotide entry." evidence="4" ref="1 2">
    <original>N</original>
    <variation>K</variation>
    <location>
        <position position="168"/>
    </location>
</feature>
<feature type="sequence conflict" description="In Ref. 1; AAA28635 and 2; no nucleotide entry." evidence="4" ref="1 2">
    <original>A</original>
    <variation>T</variation>
    <location>
        <position position="171"/>
    </location>
</feature>
<dbReference type="EMBL" id="J01098">
    <property type="protein sequence ID" value="AAA28635.1"/>
    <property type="molecule type" value="Genomic_DNA"/>
</dbReference>
<dbReference type="EMBL" id="AE014296">
    <property type="protein sequence ID" value="AAF50290.1"/>
    <property type="molecule type" value="Genomic_DNA"/>
</dbReference>
<dbReference type="EMBL" id="AE014296">
    <property type="protein sequence ID" value="AAN11962.1"/>
    <property type="molecule type" value="Genomic_DNA"/>
</dbReference>
<dbReference type="EMBL" id="AY060412">
    <property type="status" value="NOT_ANNOTATED_CDS"/>
    <property type="molecule type" value="mRNA"/>
</dbReference>
<dbReference type="EMBL" id="AY119034">
    <property type="protein sequence ID" value="AAM50894.1"/>
    <property type="molecule type" value="mRNA"/>
</dbReference>
<dbReference type="PIR" id="A02918">
    <property type="entry name" value="HHFF22"/>
</dbReference>
<dbReference type="PIR" id="A20647">
    <property type="entry name" value="A20647"/>
</dbReference>
<dbReference type="RefSeq" id="NP_001027114.1">
    <property type="nucleotide sequence ID" value="NM_001031943.3"/>
</dbReference>
<dbReference type="RefSeq" id="NP_001027115.1">
    <property type="nucleotide sequence ID" value="NM_001031944.2"/>
</dbReference>
<dbReference type="SMR" id="P02515"/>
<dbReference type="BioGRID" id="534173">
    <property type="interactions" value="172"/>
</dbReference>
<dbReference type="FunCoup" id="P02515">
    <property type="interactions" value="8"/>
</dbReference>
<dbReference type="IntAct" id="P02515">
    <property type="interactions" value="22"/>
</dbReference>
<dbReference type="STRING" id="7227.FBpp0100010"/>
<dbReference type="iPTMnet" id="P02515"/>
<dbReference type="PaxDb" id="7227-FBpp0100010"/>
<dbReference type="EnsemblMetazoa" id="FBtr0100558">
    <property type="protein sequence ID" value="FBpp0100010"/>
    <property type="gene ID" value="FBgn0001223"/>
</dbReference>
<dbReference type="EnsemblMetazoa" id="FBtr0100559">
    <property type="protein sequence ID" value="FBpp0100011"/>
    <property type="gene ID" value="FBgn0001223"/>
</dbReference>
<dbReference type="GeneID" id="3772576"/>
<dbReference type="KEGG" id="dme:Dmel_CG4460"/>
<dbReference type="AGR" id="FB:FBgn0001223"/>
<dbReference type="CTD" id="3772576"/>
<dbReference type="FlyBase" id="FBgn0001223">
    <property type="gene designation" value="Hsp22"/>
</dbReference>
<dbReference type="VEuPathDB" id="VectorBase:FBgn0001223"/>
<dbReference type="eggNOG" id="KOG3591">
    <property type="taxonomic scope" value="Eukaryota"/>
</dbReference>
<dbReference type="GeneTree" id="ENSGT00940000166889"/>
<dbReference type="HOGENOM" id="CLU_095001_3_0_1"/>
<dbReference type="InParanoid" id="P02515"/>
<dbReference type="OMA" id="IARWQER"/>
<dbReference type="OrthoDB" id="1431247at2759"/>
<dbReference type="PhylomeDB" id="P02515"/>
<dbReference type="Reactome" id="R-DME-4420097">
    <property type="pathway name" value="VEGFA-VEGFR2 Pathway"/>
</dbReference>
<dbReference type="Reactome" id="R-DME-9009391">
    <property type="pathway name" value="Extra-nuclear estrogen signaling"/>
</dbReference>
<dbReference type="BioGRID-ORCS" id="3772576">
    <property type="hits" value="0 hits in 3 CRISPR screens"/>
</dbReference>
<dbReference type="GenomeRNAi" id="3772576"/>
<dbReference type="PRO" id="PR:P02515"/>
<dbReference type="Proteomes" id="UP000000803">
    <property type="component" value="Chromosome 3L"/>
</dbReference>
<dbReference type="Bgee" id="FBgn0001223">
    <property type="expression patterns" value="Expressed in seminal fluid secreting gland and 12 other cell types or tissues"/>
</dbReference>
<dbReference type="GO" id="GO:0005737">
    <property type="term" value="C:cytoplasm"/>
    <property type="evidence" value="ECO:0000318"/>
    <property type="project" value="GO_Central"/>
</dbReference>
<dbReference type="GO" id="GO:0005759">
    <property type="term" value="C:mitochondrial matrix"/>
    <property type="evidence" value="ECO:0000314"/>
    <property type="project" value="FlyBase"/>
</dbReference>
<dbReference type="GO" id="GO:0005634">
    <property type="term" value="C:nucleus"/>
    <property type="evidence" value="ECO:0000318"/>
    <property type="project" value="GO_Central"/>
</dbReference>
<dbReference type="GO" id="GO:0042802">
    <property type="term" value="F:identical protein binding"/>
    <property type="evidence" value="ECO:0000353"/>
    <property type="project" value="FlyBase"/>
</dbReference>
<dbReference type="GO" id="GO:0051082">
    <property type="term" value="F:unfolded protein binding"/>
    <property type="evidence" value="ECO:0000314"/>
    <property type="project" value="FlyBase"/>
</dbReference>
<dbReference type="GO" id="GO:0061077">
    <property type="term" value="P:chaperone-mediated protein folding"/>
    <property type="evidence" value="ECO:0000314"/>
    <property type="project" value="FlyBase"/>
</dbReference>
<dbReference type="GO" id="GO:0008340">
    <property type="term" value="P:determination of adult lifespan"/>
    <property type="evidence" value="ECO:0000315"/>
    <property type="project" value="FlyBase"/>
</dbReference>
<dbReference type="GO" id="GO:0042026">
    <property type="term" value="P:protein refolding"/>
    <property type="evidence" value="ECO:0000318"/>
    <property type="project" value="GO_Central"/>
</dbReference>
<dbReference type="GO" id="GO:0009408">
    <property type="term" value="P:response to heat"/>
    <property type="evidence" value="ECO:0000314"/>
    <property type="project" value="FlyBase"/>
</dbReference>
<dbReference type="GO" id="GO:0006979">
    <property type="term" value="P:response to oxidative stress"/>
    <property type="evidence" value="ECO:0000315"/>
    <property type="project" value="FlyBase"/>
</dbReference>
<dbReference type="CDD" id="cd06526">
    <property type="entry name" value="metazoan_ACD"/>
    <property type="match status" value="1"/>
</dbReference>
<dbReference type="Gene3D" id="2.60.40.790">
    <property type="match status" value="1"/>
</dbReference>
<dbReference type="InterPro" id="IPR002068">
    <property type="entry name" value="A-crystallin/Hsp20_dom"/>
</dbReference>
<dbReference type="InterPro" id="IPR001436">
    <property type="entry name" value="Alpha-crystallin/sHSP_animal"/>
</dbReference>
<dbReference type="InterPro" id="IPR008978">
    <property type="entry name" value="HSP20-like_chaperone"/>
</dbReference>
<dbReference type="PANTHER" id="PTHR45640:SF13">
    <property type="entry name" value="HEAT SHOCK PROTEIN 22-RELATED"/>
    <property type="match status" value="1"/>
</dbReference>
<dbReference type="PANTHER" id="PTHR45640">
    <property type="entry name" value="HEAT SHOCK PROTEIN HSP-12.2-RELATED"/>
    <property type="match status" value="1"/>
</dbReference>
<dbReference type="Pfam" id="PF00011">
    <property type="entry name" value="HSP20"/>
    <property type="match status" value="1"/>
</dbReference>
<dbReference type="PRINTS" id="PR00299">
    <property type="entry name" value="ACRYSTALLIN"/>
</dbReference>
<dbReference type="SUPFAM" id="SSF49764">
    <property type="entry name" value="HSP20-like chaperones"/>
    <property type="match status" value="1"/>
</dbReference>
<dbReference type="PROSITE" id="PS01031">
    <property type="entry name" value="SHSP"/>
    <property type="match status" value="1"/>
</dbReference>
<evidence type="ECO:0000255" key="1">
    <source>
        <dbReference type="PROSITE-ProRule" id="PRU00285"/>
    </source>
</evidence>
<evidence type="ECO:0000256" key="2">
    <source>
        <dbReference type="SAM" id="MobiDB-lite"/>
    </source>
</evidence>
<evidence type="ECO:0000269" key="3">
    <source>
    </source>
</evidence>
<evidence type="ECO:0000305" key="4"/>
<sequence>MRSLPMFWRMAEEMARMPRLSSPFHAFFHEPPVWSVALPRNWQQIARWQEQEFAPPATVNKDGYKLTLDVKDYSELKVKVLDESVVLVEGKSEQQEAEQGGYSSRHFLRRFVLPEGYEADKVTSTLSSDGVLTISVPNPPGVQETLKEREVTIEQTGEPAKKSAEEPNDKAASQ</sequence>
<proteinExistence type="evidence at protein level"/>
<comment type="similarity">
    <text evidence="1">Belongs to the small heat shock protein (HSP20) family.</text>
</comment>
<keyword id="KW-0597">Phosphoprotein</keyword>
<keyword id="KW-1185">Reference proteome</keyword>
<keyword id="KW-0346">Stress response</keyword>
<name>HSP22_DROME</name>